<protein>
    <recommendedName>
        <fullName>Gibberellin 2-beta-dioxygenase 4</fullName>
        <ecNumber>1.14.11.13</ecNumber>
    </recommendedName>
    <alternativeName>
        <fullName>GA 2-oxidase 4</fullName>
    </alternativeName>
    <alternativeName>
        <fullName>Gibberellin 2-beta-hydroxylase 4</fullName>
    </alternativeName>
    <alternativeName>
        <fullName>Gibberellin 2-oxidase 4</fullName>
    </alternativeName>
</protein>
<name>G2OX4_ARATH</name>
<proteinExistence type="evidence at transcript level"/>
<evidence type="ECO:0000255" key="1"/>
<evidence type="ECO:0000255" key="2">
    <source>
        <dbReference type="PROSITE-ProRule" id="PRU00805"/>
    </source>
</evidence>
<evidence type="ECO:0000269" key="3">
    <source>
    </source>
</evidence>
<evidence type="ECO:0000269" key="4">
    <source>
    </source>
</evidence>
<evidence type="ECO:0000269" key="5">
    <source>
    </source>
</evidence>
<evidence type="ECO:0000269" key="6">
    <source ref="1"/>
</evidence>
<evidence type="ECO:0000305" key="7"/>
<comment type="function">
    <text evidence="5 6">Catalyzes the 2-beta-hydroxylation of several biologically active gibberellins, leading to the homeostatic regulation of their endogenous level. Catabolism of gibberellins (GAs) plays a central role in plant development. Converts GA9/GA20 to GA51/GA29 and GA4/GA1 to GA34/GA8.</text>
</comment>
<comment type="catalytic activity">
    <reaction>
        <text>gibberellin A1 + 2-oxoglutarate + O2 = gibberellin A8 + succinate + CO2</text>
        <dbReference type="Rhea" id="RHEA:15005"/>
        <dbReference type="ChEBI" id="CHEBI:15379"/>
        <dbReference type="ChEBI" id="CHEBI:16526"/>
        <dbReference type="ChEBI" id="CHEBI:16810"/>
        <dbReference type="ChEBI" id="CHEBI:30031"/>
        <dbReference type="ChEBI" id="CHEBI:58524"/>
        <dbReference type="ChEBI" id="CHEBI:58594"/>
        <dbReference type="EC" id="1.14.11.13"/>
    </reaction>
</comment>
<comment type="cofactor">
    <cofactor evidence="2">
        <name>Fe(2+)</name>
        <dbReference type="ChEBI" id="CHEBI:29033"/>
    </cofactor>
    <text evidence="2">Binds 1 Fe(2+) ion per subunit.</text>
</comment>
<comment type="pathway">
    <text>Plant hormone biosynthesis; gibberellin biosynthesis.</text>
</comment>
<comment type="tissue specificity">
    <text evidence="3 4">Expressed at the base of the shoot apical meristem and developing leaf primordia.</text>
</comment>
<comment type="induction">
    <text evidence="4">Not regulated by auxin. Down-regulated by paclobutrazol.</text>
</comment>
<comment type="similarity">
    <text evidence="7">Belongs to the iron/ascorbate-dependent oxidoreductase family. GA2OX subfamily.</text>
</comment>
<feature type="chain" id="PRO_0000422355" description="Gibberellin 2-beta-dioxygenase 4">
    <location>
        <begin position="1"/>
        <end position="321"/>
    </location>
</feature>
<feature type="domain" description="Fe2OG dioxygenase" evidence="2">
    <location>
        <begin position="156"/>
        <end position="269"/>
    </location>
</feature>
<feature type="active site" evidence="1">
    <location>
        <position position="260"/>
    </location>
</feature>
<feature type="binding site" evidence="2">
    <location>
        <position position="193"/>
    </location>
    <ligand>
        <name>Fe cation</name>
        <dbReference type="ChEBI" id="CHEBI:24875"/>
    </ligand>
</feature>
<feature type="binding site" evidence="2">
    <location>
        <position position="195"/>
    </location>
    <ligand>
        <name>Fe cation</name>
        <dbReference type="ChEBI" id="CHEBI:24875"/>
    </ligand>
</feature>
<feature type="binding site" evidence="2">
    <location>
        <position position="250"/>
    </location>
    <ligand>
        <name>Fe cation</name>
        <dbReference type="ChEBI" id="CHEBI:24875"/>
    </ligand>
</feature>
<dbReference type="EC" id="1.14.11.13"/>
<dbReference type="EMBL" id="AY859740">
    <property type="protein sequence ID" value="AAW56769.1"/>
    <property type="molecule type" value="mRNA"/>
</dbReference>
<dbReference type="EMBL" id="AC051631">
    <property type="protein sequence ID" value="AAG51528.1"/>
    <property type="molecule type" value="Genomic_DNA"/>
</dbReference>
<dbReference type="EMBL" id="CP002684">
    <property type="protein sequence ID" value="AEE32235.1"/>
    <property type="molecule type" value="Genomic_DNA"/>
</dbReference>
<dbReference type="PIR" id="C96520">
    <property type="entry name" value="C96520"/>
</dbReference>
<dbReference type="RefSeq" id="NP_175233.1">
    <property type="nucleotide sequence ID" value="NM_103695.2"/>
</dbReference>
<dbReference type="SMR" id="Q9C7Z1"/>
<dbReference type="FunCoup" id="Q9C7Z1">
    <property type="interactions" value="20"/>
</dbReference>
<dbReference type="STRING" id="3702.Q9C7Z1"/>
<dbReference type="PaxDb" id="3702-AT1G47990.1"/>
<dbReference type="EnsemblPlants" id="AT1G47990.1">
    <property type="protein sequence ID" value="AT1G47990.1"/>
    <property type="gene ID" value="AT1G47990"/>
</dbReference>
<dbReference type="GeneID" id="841217"/>
<dbReference type="Gramene" id="AT1G47990.1">
    <property type="protein sequence ID" value="AT1G47990.1"/>
    <property type="gene ID" value="AT1G47990"/>
</dbReference>
<dbReference type="KEGG" id="ath:AT1G47990"/>
<dbReference type="Araport" id="AT1G47990"/>
<dbReference type="TAIR" id="AT1G47990">
    <property type="gene designation" value="GA2OX4"/>
</dbReference>
<dbReference type="eggNOG" id="KOG0143">
    <property type="taxonomic scope" value="Eukaryota"/>
</dbReference>
<dbReference type="HOGENOM" id="CLU_010119_16_3_1"/>
<dbReference type="InParanoid" id="Q9C7Z1"/>
<dbReference type="OMA" id="RCAVNGY"/>
<dbReference type="PhylomeDB" id="Q9C7Z1"/>
<dbReference type="BRENDA" id="1.14.11.13">
    <property type="organism ID" value="399"/>
</dbReference>
<dbReference type="UniPathway" id="UPA00390"/>
<dbReference type="PRO" id="PR:Q9C7Z1"/>
<dbReference type="Proteomes" id="UP000006548">
    <property type="component" value="Chromosome 1"/>
</dbReference>
<dbReference type="ExpressionAtlas" id="Q9C7Z1">
    <property type="expression patterns" value="baseline and differential"/>
</dbReference>
<dbReference type="GO" id="GO:0045543">
    <property type="term" value="F:gibberellin 2-beta-dioxygenase activity"/>
    <property type="evidence" value="ECO:0007669"/>
    <property type="project" value="UniProtKB-EC"/>
</dbReference>
<dbReference type="GO" id="GO:0046872">
    <property type="term" value="F:metal ion binding"/>
    <property type="evidence" value="ECO:0007669"/>
    <property type="project" value="UniProtKB-KW"/>
</dbReference>
<dbReference type="GO" id="GO:0009686">
    <property type="term" value="P:gibberellin biosynthetic process"/>
    <property type="evidence" value="ECO:0007669"/>
    <property type="project" value="UniProtKB-UniPathway"/>
</dbReference>
<dbReference type="GO" id="GO:0045487">
    <property type="term" value="P:gibberellin catabolic process"/>
    <property type="evidence" value="ECO:0000314"/>
    <property type="project" value="TAIR"/>
</dbReference>
<dbReference type="FunFam" id="2.60.120.330:FF:000014">
    <property type="entry name" value="Gibberellin 2-beta-dioxygenase 1"/>
    <property type="match status" value="1"/>
</dbReference>
<dbReference type="Gene3D" id="2.60.120.330">
    <property type="entry name" value="B-lactam Antibiotic, Isopenicillin N Synthase, Chain"/>
    <property type="match status" value="1"/>
</dbReference>
<dbReference type="InterPro" id="IPR026992">
    <property type="entry name" value="DIOX_N"/>
</dbReference>
<dbReference type="InterPro" id="IPR044861">
    <property type="entry name" value="IPNS-like_FE2OG_OXY"/>
</dbReference>
<dbReference type="InterPro" id="IPR027443">
    <property type="entry name" value="IPNS-like_sf"/>
</dbReference>
<dbReference type="InterPro" id="IPR050231">
    <property type="entry name" value="Iron_ascorbate_oxido_reductase"/>
</dbReference>
<dbReference type="InterPro" id="IPR005123">
    <property type="entry name" value="Oxoglu/Fe-dep_dioxygenase_dom"/>
</dbReference>
<dbReference type="PANTHER" id="PTHR47990">
    <property type="entry name" value="2-OXOGLUTARATE (2OG) AND FE(II)-DEPENDENT OXYGENASE SUPERFAMILY PROTEIN-RELATED"/>
    <property type="match status" value="1"/>
</dbReference>
<dbReference type="Pfam" id="PF03171">
    <property type="entry name" value="2OG-FeII_Oxy"/>
    <property type="match status" value="1"/>
</dbReference>
<dbReference type="Pfam" id="PF14226">
    <property type="entry name" value="DIOX_N"/>
    <property type="match status" value="1"/>
</dbReference>
<dbReference type="PRINTS" id="PR00682">
    <property type="entry name" value="IPNSYNTHASE"/>
</dbReference>
<dbReference type="SUPFAM" id="SSF51197">
    <property type="entry name" value="Clavaminate synthase-like"/>
    <property type="match status" value="1"/>
</dbReference>
<dbReference type="PROSITE" id="PS51471">
    <property type="entry name" value="FE2OG_OXY"/>
    <property type="match status" value="1"/>
</dbReference>
<sequence length="321" mass="35873">MVKGSQKIVAVDQDIPIIDMSQERSQVSMQIVKACESLGFFKVINHGVDQTTISRMEQESINFFAKPAHEKKSVRPVNQPFRYGFRDIGLNGDSGEVEYLLFHTNDPAFRSQLSFSSAVNCYIEAVKQLAREILDLTAEGLHVPPHSFSRLISSVDSDSVLRVNHYPPSDQFFGEANLSDQSVSLTRVGFGEHTDPQILTVLRSNGVGGLQVSNSDGMWVSVSPDPSAFCVNVGDLLQVMTNGRFISVRHRALTYGEESRLSTAYFAGPPLQAKIGPLSAMVMTMNQPRLYQTFTWGEYKKRAYSLRLEDSRLDMFRTCKD</sequence>
<accession>Q9C7Z1</accession>
<organism>
    <name type="scientific">Arabidopsis thaliana</name>
    <name type="common">Mouse-ear cress</name>
    <dbReference type="NCBI Taxonomy" id="3702"/>
    <lineage>
        <taxon>Eukaryota</taxon>
        <taxon>Viridiplantae</taxon>
        <taxon>Streptophyta</taxon>
        <taxon>Embryophyta</taxon>
        <taxon>Tracheophyta</taxon>
        <taxon>Spermatophyta</taxon>
        <taxon>Magnoliopsida</taxon>
        <taxon>eudicotyledons</taxon>
        <taxon>Gunneridae</taxon>
        <taxon>Pentapetalae</taxon>
        <taxon>rosids</taxon>
        <taxon>malvids</taxon>
        <taxon>Brassicales</taxon>
        <taxon>Brassicaceae</taxon>
        <taxon>Camelineae</taxon>
        <taxon>Arabidopsis</taxon>
    </lineage>
</organism>
<gene>
    <name type="primary">GA2OX4</name>
    <name type="ordered locus">At1g47990</name>
    <name type="ORF">T2J15.10</name>
</gene>
<keyword id="KW-0223">Dioxygenase</keyword>
<keyword id="KW-0408">Iron</keyword>
<keyword id="KW-0479">Metal-binding</keyword>
<keyword id="KW-0560">Oxidoreductase</keyword>
<keyword id="KW-1185">Reference proteome</keyword>
<reference key="1">
    <citation type="submission" date="2004-12" db="EMBL/GenBank/DDBJ databases">
        <title>Recombinant AtGA2ox4 shows gibberellin 2-oxidase activity in vitro.</title>
        <authorList>
            <person name="Rieu I."/>
            <person name="Thomas S.G."/>
            <person name="Phillips A.L."/>
            <person name="Hedden P."/>
        </authorList>
    </citation>
    <scope>NUCLEOTIDE SEQUENCE [MRNA]</scope>
    <scope>FUNCTION</scope>
</reference>
<reference key="2">
    <citation type="journal article" date="2000" name="Nature">
        <title>Sequence and analysis of chromosome 1 of the plant Arabidopsis thaliana.</title>
        <authorList>
            <person name="Theologis A."/>
            <person name="Ecker J.R."/>
            <person name="Palm C.J."/>
            <person name="Federspiel N.A."/>
            <person name="Kaul S."/>
            <person name="White O."/>
            <person name="Alonso J."/>
            <person name="Altafi H."/>
            <person name="Araujo R."/>
            <person name="Bowman C.L."/>
            <person name="Brooks S.Y."/>
            <person name="Buehler E."/>
            <person name="Chan A."/>
            <person name="Chao Q."/>
            <person name="Chen H."/>
            <person name="Cheuk R.F."/>
            <person name="Chin C.W."/>
            <person name="Chung M.K."/>
            <person name="Conn L."/>
            <person name="Conway A.B."/>
            <person name="Conway A.R."/>
            <person name="Creasy T.H."/>
            <person name="Dewar K."/>
            <person name="Dunn P."/>
            <person name="Etgu P."/>
            <person name="Feldblyum T.V."/>
            <person name="Feng J.-D."/>
            <person name="Fong B."/>
            <person name="Fujii C.Y."/>
            <person name="Gill J.E."/>
            <person name="Goldsmith A.D."/>
            <person name="Haas B."/>
            <person name="Hansen N.F."/>
            <person name="Hughes B."/>
            <person name="Huizar L."/>
            <person name="Hunter J.L."/>
            <person name="Jenkins J."/>
            <person name="Johnson-Hopson C."/>
            <person name="Khan S."/>
            <person name="Khaykin E."/>
            <person name="Kim C.J."/>
            <person name="Koo H.L."/>
            <person name="Kremenetskaia I."/>
            <person name="Kurtz D.B."/>
            <person name="Kwan A."/>
            <person name="Lam B."/>
            <person name="Langin-Hooper S."/>
            <person name="Lee A."/>
            <person name="Lee J.M."/>
            <person name="Lenz C.A."/>
            <person name="Li J.H."/>
            <person name="Li Y.-P."/>
            <person name="Lin X."/>
            <person name="Liu S.X."/>
            <person name="Liu Z.A."/>
            <person name="Luros J.S."/>
            <person name="Maiti R."/>
            <person name="Marziali A."/>
            <person name="Militscher J."/>
            <person name="Miranda M."/>
            <person name="Nguyen M."/>
            <person name="Nierman W.C."/>
            <person name="Osborne B.I."/>
            <person name="Pai G."/>
            <person name="Peterson J."/>
            <person name="Pham P.K."/>
            <person name="Rizzo M."/>
            <person name="Rooney T."/>
            <person name="Rowley D."/>
            <person name="Sakano H."/>
            <person name="Salzberg S.L."/>
            <person name="Schwartz J.R."/>
            <person name="Shinn P."/>
            <person name="Southwick A.M."/>
            <person name="Sun H."/>
            <person name="Tallon L.J."/>
            <person name="Tambunga G."/>
            <person name="Toriumi M.J."/>
            <person name="Town C.D."/>
            <person name="Utterback T."/>
            <person name="Van Aken S."/>
            <person name="Vaysberg M."/>
            <person name="Vysotskaia V.S."/>
            <person name="Walker M."/>
            <person name="Wu D."/>
            <person name="Yu G."/>
            <person name="Fraser C.M."/>
            <person name="Venter J.C."/>
            <person name="Davis R.W."/>
        </authorList>
    </citation>
    <scope>NUCLEOTIDE SEQUENCE [LARGE SCALE GENOMIC DNA]</scope>
    <source>
        <strain>cv. Columbia</strain>
    </source>
</reference>
<reference key="3">
    <citation type="journal article" date="2017" name="Plant J.">
        <title>Araport11: a complete reannotation of the Arabidopsis thaliana reference genome.</title>
        <authorList>
            <person name="Cheng C.Y."/>
            <person name="Krishnakumar V."/>
            <person name="Chan A.P."/>
            <person name="Thibaud-Nissen F."/>
            <person name="Schobel S."/>
            <person name="Town C.D."/>
        </authorList>
    </citation>
    <scope>GENOME REANNOTATION</scope>
    <source>
        <strain>cv. Columbia</strain>
    </source>
</reference>
<reference key="4">
    <citation type="journal article" date="2005" name="Curr. Biol.">
        <title>KNOX action in Arabidopsis is mediated by coordinate regulation of cytokinin and gibberellin activities.</title>
        <authorList>
            <person name="Jasinski S."/>
            <person name="Piazza P."/>
            <person name="Craft J."/>
            <person name="Hay A."/>
            <person name="Woolley L."/>
            <person name="Rieu I."/>
            <person name="Phillips A."/>
            <person name="Hedden P."/>
            <person name="Tsiantis M."/>
        </authorList>
    </citation>
    <scope>TISSUE SPECIFICITY</scope>
</reference>
<reference key="5">
    <citation type="journal article" date="2006" name="Plant Physiol.">
        <title>Transcriptional regulation of gibberellin metabolism genes by auxin signaling in Arabidopsis.</title>
        <authorList>
            <person name="Frigerio M."/>
            <person name="Alabadi D."/>
            <person name="Perez-Gomez J."/>
            <person name="Garcia-Carcel L."/>
            <person name="Phillips A.L."/>
            <person name="Hedden P."/>
            <person name="Blazquez M.A."/>
        </authorList>
    </citation>
    <scope>INDUCTION BY AUXIN AND PACLOBUTRAZOL</scope>
    <scope>TISSUE SPECIFICITY</scope>
</reference>
<reference key="6">
    <citation type="journal article" date="2008" name="Plant Cell">
        <title>Genetic analysis reveals that C19-GA 2-oxidation is a major gibberellin inactivation pathway in Arabidopsis.</title>
        <authorList>
            <person name="Rieu I."/>
            <person name="Eriksson S."/>
            <person name="Powers S.J."/>
            <person name="Gong F."/>
            <person name="Griffiths J."/>
            <person name="Woolley L."/>
            <person name="Benlloch R."/>
            <person name="Nilsson O."/>
            <person name="Thomas S.G."/>
            <person name="Hedden P."/>
            <person name="Phillips A.L."/>
        </authorList>
    </citation>
    <scope>FUNCTION</scope>
</reference>
<reference key="7">
    <citation type="journal article" date="2011" name="Gene">
        <title>Evolutionary analysis of three gibberellin oxidase genes in rice, Arabidopsis, and soybean.</title>
        <authorList>
            <person name="Han F."/>
            <person name="Zhu B."/>
        </authorList>
    </citation>
    <scope>GENE FAMILY</scope>
</reference>